<gene>
    <name evidence="1" type="primary">ycf4</name>
    <name type="ordered locus">PS134</name>
</gene>
<proteinExistence type="inferred from homology"/>
<organism>
    <name type="scientific">Saccharum hybrid</name>
    <name type="common">Sugarcane</name>
    <dbReference type="NCBI Taxonomy" id="15819"/>
    <lineage>
        <taxon>Eukaryota</taxon>
        <taxon>Viridiplantae</taxon>
        <taxon>Streptophyta</taxon>
        <taxon>Embryophyta</taxon>
        <taxon>Tracheophyta</taxon>
        <taxon>Spermatophyta</taxon>
        <taxon>Magnoliopsida</taxon>
        <taxon>Liliopsida</taxon>
        <taxon>Poales</taxon>
        <taxon>Poaceae</taxon>
        <taxon>PACMAD clade</taxon>
        <taxon>Panicoideae</taxon>
        <taxon>Andropogonodae</taxon>
        <taxon>Andropogoneae</taxon>
        <taxon>Saccharinae</taxon>
        <taxon>Saccharum</taxon>
    </lineage>
</organism>
<name>YCF4_SACHY</name>
<accession>Q6L389</accession>
<keyword id="KW-0150">Chloroplast</keyword>
<keyword id="KW-0472">Membrane</keyword>
<keyword id="KW-0602">Photosynthesis</keyword>
<keyword id="KW-0934">Plastid</keyword>
<keyword id="KW-0793">Thylakoid</keyword>
<keyword id="KW-0812">Transmembrane</keyword>
<keyword id="KW-1133">Transmembrane helix</keyword>
<feature type="chain" id="PRO_0000217626" description="Photosystem I assembly protein Ycf4">
    <location>
        <begin position="1"/>
        <end position="185"/>
    </location>
</feature>
<feature type="transmembrane region" description="Helical" evidence="1">
    <location>
        <begin position="21"/>
        <end position="43"/>
    </location>
</feature>
<feature type="transmembrane region" description="Helical" evidence="1">
    <location>
        <begin position="63"/>
        <end position="85"/>
    </location>
</feature>
<comment type="function">
    <text evidence="1">Seems to be required for the assembly of the photosystem I complex.</text>
</comment>
<comment type="subcellular location">
    <subcellularLocation>
        <location evidence="1">Plastid</location>
        <location evidence="1">Chloroplast thylakoid membrane</location>
        <topology evidence="1">Multi-pass membrane protein</topology>
    </subcellularLocation>
</comment>
<comment type="similarity">
    <text evidence="1">Belongs to the Ycf4 family.</text>
</comment>
<protein>
    <recommendedName>
        <fullName evidence="1">Photosystem I assembly protein Ycf4</fullName>
    </recommendedName>
</protein>
<reference key="1">
    <citation type="journal article" date="2004" name="Curr. Genet.">
        <title>Structural features and transcript-editing analysis of sugarcane (Saccharum officinarum L.) chloroplast genome.</title>
        <authorList>
            <person name="Calsa T. Jr."/>
            <person name="Carraro D.M."/>
            <person name="Benatti M.R."/>
            <person name="Barbosa A.C."/>
            <person name="Kitajima J.P."/>
            <person name="Carrer H."/>
        </authorList>
    </citation>
    <scope>NUCLEOTIDE SEQUENCE [LARGE SCALE GENOMIC DNA]</scope>
    <source>
        <strain>cv. SP-80-3280</strain>
    </source>
</reference>
<sequence>MNWRSEHIWIELLKGSRKRGNFFWACILFLGSLGFLAVGASSYLGKNMISVLPSQQILFFPQGVVMSFYGIAGLFISSYLWCTILWNVGSGYDRFDRKEGIVCIFRWGFPGIKRRIFLQFLVRDIQSIRIQVKEGLYPRRILYMEIRGQGVIPLTRTDEKFFTPREIEQKAAELAYFLRVPIEVF</sequence>
<geneLocation type="chloroplast"/>
<dbReference type="EMBL" id="AE009947">
    <property type="protein sequence ID" value="AAT44703.1"/>
    <property type="molecule type" value="Genomic_DNA"/>
</dbReference>
<dbReference type="GO" id="GO:0009535">
    <property type="term" value="C:chloroplast thylakoid membrane"/>
    <property type="evidence" value="ECO:0007669"/>
    <property type="project" value="UniProtKB-SubCell"/>
</dbReference>
<dbReference type="GO" id="GO:0009522">
    <property type="term" value="C:photosystem I"/>
    <property type="evidence" value="ECO:0007669"/>
    <property type="project" value="InterPro"/>
</dbReference>
<dbReference type="GO" id="GO:0015979">
    <property type="term" value="P:photosynthesis"/>
    <property type="evidence" value="ECO:0007669"/>
    <property type="project" value="UniProtKB-UniRule"/>
</dbReference>
<dbReference type="HAMAP" id="MF_00437">
    <property type="entry name" value="Ycf4"/>
    <property type="match status" value="1"/>
</dbReference>
<dbReference type="InterPro" id="IPR003359">
    <property type="entry name" value="PSI_Ycf4_assembly"/>
</dbReference>
<dbReference type="PANTHER" id="PTHR33288">
    <property type="match status" value="1"/>
</dbReference>
<dbReference type="PANTHER" id="PTHR33288:SF4">
    <property type="entry name" value="PHOTOSYSTEM I ASSEMBLY PROTEIN YCF4"/>
    <property type="match status" value="1"/>
</dbReference>
<dbReference type="Pfam" id="PF02392">
    <property type="entry name" value="Ycf4"/>
    <property type="match status" value="1"/>
</dbReference>
<evidence type="ECO:0000255" key="1">
    <source>
        <dbReference type="HAMAP-Rule" id="MF_00437"/>
    </source>
</evidence>